<accession>A5IGJ7</accession>
<gene>
    <name evidence="1" type="primary">hutI</name>
    <name type="ordered locus">LPC_2582</name>
</gene>
<proteinExistence type="inferred from homology"/>
<reference key="1">
    <citation type="submission" date="2006-11" db="EMBL/GenBank/DDBJ databases">
        <title>Identification and characterization of a new conjugation/ type IVA secretion system (trb/tra) of L. pneumophila Corby localized on a mobile genomic island.</title>
        <authorList>
            <person name="Gloeckner G."/>
            <person name="Albert-Weissenberger C."/>
            <person name="Weinmann E."/>
            <person name="Jacobi S."/>
            <person name="Schunder E."/>
            <person name="Steinert M."/>
            <person name="Buchrieser C."/>
            <person name="Hacker J."/>
            <person name="Heuner K."/>
        </authorList>
    </citation>
    <scope>NUCLEOTIDE SEQUENCE [LARGE SCALE GENOMIC DNA]</scope>
    <source>
        <strain>Corby</strain>
    </source>
</reference>
<name>HUTI_LEGPC</name>
<feature type="chain" id="PRO_0000306468" description="Imidazolonepropionase">
    <location>
        <begin position="1"/>
        <end position="403"/>
    </location>
</feature>
<feature type="binding site" evidence="1">
    <location>
        <position position="69"/>
    </location>
    <ligand>
        <name>Fe(3+)</name>
        <dbReference type="ChEBI" id="CHEBI:29034"/>
    </ligand>
</feature>
<feature type="binding site" evidence="1">
    <location>
        <position position="69"/>
    </location>
    <ligand>
        <name>Zn(2+)</name>
        <dbReference type="ChEBI" id="CHEBI:29105"/>
    </ligand>
</feature>
<feature type="binding site" evidence="1">
    <location>
        <position position="71"/>
    </location>
    <ligand>
        <name>Fe(3+)</name>
        <dbReference type="ChEBI" id="CHEBI:29034"/>
    </ligand>
</feature>
<feature type="binding site" evidence="1">
    <location>
        <position position="71"/>
    </location>
    <ligand>
        <name>Zn(2+)</name>
        <dbReference type="ChEBI" id="CHEBI:29105"/>
    </ligand>
</feature>
<feature type="binding site" evidence="1">
    <location>
        <position position="78"/>
    </location>
    <ligand>
        <name>4-imidazolone-5-propanoate</name>
        <dbReference type="ChEBI" id="CHEBI:77893"/>
    </ligand>
</feature>
<feature type="binding site" evidence="1">
    <location>
        <position position="141"/>
    </location>
    <ligand>
        <name>4-imidazolone-5-propanoate</name>
        <dbReference type="ChEBI" id="CHEBI:77893"/>
    </ligand>
</feature>
<feature type="binding site" evidence="1">
    <location>
        <position position="141"/>
    </location>
    <ligand>
        <name>N-formimidoyl-L-glutamate</name>
        <dbReference type="ChEBI" id="CHEBI:58928"/>
    </ligand>
</feature>
<feature type="binding site" evidence="1">
    <location>
        <position position="174"/>
    </location>
    <ligand>
        <name>4-imidazolone-5-propanoate</name>
        <dbReference type="ChEBI" id="CHEBI:77893"/>
    </ligand>
</feature>
<feature type="binding site" evidence="1">
    <location>
        <position position="239"/>
    </location>
    <ligand>
        <name>Fe(3+)</name>
        <dbReference type="ChEBI" id="CHEBI:29034"/>
    </ligand>
</feature>
<feature type="binding site" evidence="1">
    <location>
        <position position="239"/>
    </location>
    <ligand>
        <name>Zn(2+)</name>
        <dbReference type="ChEBI" id="CHEBI:29105"/>
    </ligand>
</feature>
<feature type="binding site" evidence="1">
    <location>
        <position position="242"/>
    </location>
    <ligand>
        <name>4-imidazolone-5-propanoate</name>
        <dbReference type="ChEBI" id="CHEBI:77893"/>
    </ligand>
</feature>
<feature type="binding site" evidence="1">
    <location>
        <position position="314"/>
    </location>
    <ligand>
        <name>Fe(3+)</name>
        <dbReference type="ChEBI" id="CHEBI:29034"/>
    </ligand>
</feature>
<feature type="binding site" evidence="1">
    <location>
        <position position="314"/>
    </location>
    <ligand>
        <name>Zn(2+)</name>
        <dbReference type="ChEBI" id="CHEBI:29105"/>
    </ligand>
</feature>
<feature type="binding site" evidence="1">
    <location>
        <position position="316"/>
    </location>
    <ligand>
        <name>N-formimidoyl-L-glutamate</name>
        <dbReference type="ChEBI" id="CHEBI:58928"/>
    </ligand>
</feature>
<feature type="binding site" evidence="1">
    <location>
        <position position="318"/>
    </location>
    <ligand>
        <name>N-formimidoyl-L-glutamate</name>
        <dbReference type="ChEBI" id="CHEBI:58928"/>
    </ligand>
</feature>
<feature type="binding site" evidence="1">
    <location>
        <position position="319"/>
    </location>
    <ligand>
        <name>4-imidazolone-5-propanoate</name>
        <dbReference type="ChEBI" id="CHEBI:77893"/>
    </ligand>
</feature>
<organism>
    <name type="scientific">Legionella pneumophila (strain Corby)</name>
    <dbReference type="NCBI Taxonomy" id="400673"/>
    <lineage>
        <taxon>Bacteria</taxon>
        <taxon>Pseudomonadati</taxon>
        <taxon>Pseudomonadota</taxon>
        <taxon>Gammaproteobacteria</taxon>
        <taxon>Legionellales</taxon>
        <taxon>Legionellaceae</taxon>
        <taxon>Legionella</taxon>
    </lineage>
</organism>
<evidence type="ECO:0000255" key="1">
    <source>
        <dbReference type="HAMAP-Rule" id="MF_00372"/>
    </source>
</evidence>
<keyword id="KW-0963">Cytoplasm</keyword>
<keyword id="KW-0369">Histidine metabolism</keyword>
<keyword id="KW-0378">Hydrolase</keyword>
<keyword id="KW-0408">Iron</keyword>
<keyword id="KW-0479">Metal-binding</keyword>
<keyword id="KW-0862">Zinc</keyword>
<protein>
    <recommendedName>
        <fullName evidence="1">Imidazolonepropionase</fullName>
        <ecNumber evidence="1">3.5.2.7</ecNumber>
    </recommendedName>
    <alternativeName>
        <fullName evidence="1">Imidazolone-5-propionate hydrolase</fullName>
    </alternativeName>
</protein>
<comment type="function">
    <text evidence="1">Catalyzes the hydrolytic cleavage of the carbon-nitrogen bond in imidazolone-5-propanoate to yield N-formimidoyl-L-glutamate. It is the third step in the universal histidine degradation pathway.</text>
</comment>
<comment type="catalytic activity">
    <reaction evidence="1">
        <text>4-imidazolone-5-propanoate + H2O = N-formimidoyl-L-glutamate</text>
        <dbReference type="Rhea" id="RHEA:23660"/>
        <dbReference type="ChEBI" id="CHEBI:15377"/>
        <dbReference type="ChEBI" id="CHEBI:58928"/>
        <dbReference type="ChEBI" id="CHEBI:77893"/>
        <dbReference type="EC" id="3.5.2.7"/>
    </reaction>
</comment>
<comment type="cofactor">
    <cofactor evidence="1">
        <name>Zn(2+)</name>
        <dbReference type="ChEBI" id="CHEBI:29105"/>
    </cofactor>
    <cofactor evidence="1">
        <name>Fe(3+)</name>
        <dbReference type="ChEBI" id="CHEBI:29034"/>
    </cofactor>
    <text evidence="1">Binds 1 zinc or iron ion per subunit.</text>
</comment>
<comment type="pathway">
    <text evidence="1">Amino-acid degradation; L-histidine degradation into L-glutamate; N-formimidoyl-L-glutamate from L-histidine: step 3/3.</text>
</comment>
<comment type="subcellular location">
    <subcellularLocation>
        <location evidence="1">Cytoplasm</location>
    </subcellularLocation>
</comment>
<comment type="similarity">
    <text evidence="1">Belongs to the metallo-dependent hydrolases superfamily. HutI family.</text>
</comment>
<dbReference type="EC" id="3.5.2.7" evidence="1"/>
<dbReference type="EMBL" id="CP000675">
    <property type="protein sequence ID" value="ABQ56497.1"/>
    <property type="molecule type" value="Genomic_DNA"/>
</dbReference>
<dbReference type="RefSeq" id="WP_011945859.1">
    <property type="nucleotide sequence ID" value="NC_009494.2"/>
</dbReference>
<dbReference type="SMR" id="A5IGJ7"/>
<dbReference type="KEGG" id="lpc:LPC_2582"/>
<dbReference type="HOGENOM" id="CLU_041647_0_0_6"/>
<dbReference type="UniPathway" id="UPA00379">
    <property type="reaction ID" value="UER00551"/>
</dbReference>
<dbReference type="GO" id="GO:0005737">
    <property type="term" value="C:cytoplasm"/>
    <property type="evidence" value="ECO:0007669"/>
    <property type="project" value="UniProtKB-SubCell"/>
</dbReference>
<dbReference type="GO" id="GO:0050480">
    <property type="term" value="F:imidazolonepropionase activity"/>
    <property type="evidence" value="ECO:0007669"/>
    <property type="project" value="UniProtKB-UniRule"/>
</dbReference>
<dbReference type="GO" id="GO:0005506">
    <property type="term" value="F:iron ion binding"/>
    <property type="evidence" value="ECO:0007669"/>
    <property type="project" value="UniProtKB-UniRule"/>
</dbReference>
<dbReference type="GO" id="GO:0008270">
    <property type="term" value="F:zinc ion binding"/>
    <property type="evidence" value="ECO:0007669"/>
    <property type="project" value="UniProtKB-UniRule"/>
</dbReference>
<dbReference type="GO" id="GO:0019556">
    <property type="term" value="P:L-histidine catabolic process to glutamate and formamide"/>
    <property type="evidence" value="ECO:0007669"/>
    <property type="project" value="UniProtKB-UniPathway"/>
</dbReference>
<dbReference type="GO" id="GO:0019557">
    <property type="term" value="P:L-histidine catabolic process to glutamate and formate"/>
    <property type="evidence" value="ECO:0007669"/>
    <property type="project" value="UniProtKB-UniPathway"/>
</dbReference>
<dbReference type="CDD" id="cd01296">
    <property type="entry name" value="Imidazolone-5PH"/>
    <property type="match status" value="1"/>
</dbReference>
<dbReference type="FunFam" id="3.20.20.140:FF:000007">
    <property type="entry name" value="Imidazolonepropionase"/>
    <property type="match status" value="1"/>
</dbReference>
<dbReference type="Gene3D" id="3.20.20.140">
    <property type="entry name" value="Metal-dependent hydrolases"/>
    <property type="match status" value="1"/>
</dbReference>
<dbReference type="Gene3D" id="2.30.40.10">
    <property type="entry name" value="Urease, subunit C, domain 1"/>
    <property type="match status" value="1"/>
</dbReference>
<dbReference type="HAMAP" id="MF_00372">
    <property type="entry name" value="HutI"/>
    <property type="match status" value="1"/>
</dbReference>
<dbReference type="InterPro" id="IPR006680">
    <property type="entry name" value="Amidohydro-rel"/>
</dbReference>
<dbReference type="InterPro" id="IPR005920">
    <property type="entry name" value="HutI"/>
</dbReference>
<dbReference type="InterPro" id="IPR011059">
    <property type="entry name" value="Metal-dep_hydrolase_composite"/>
</dbReference>
<dbReference type="InterPro" id="IPR032466">
    <property type="entry name" value="Metal_Hydrolase"/>
</dbReference>
<dbReference type="NCBIfam" id="TIGR01224">
    <property type="entry name" value="hutI"/>
    <property type="match status" value="1"/>
</dbReference>
<dbReference type="PANTHER" id="PTHR42752">
    <property type="entry name" value="IMIDAZOLONEPROPIONASE"/>
    <property type="match status" value="1"/>
</dbReference>
<dbReference type="PANTHER" id="PTHR42752:SF1">
    <property type="entry name" value="IMIDAZOLONEPROPIONASE-RELATED"/>
    <property type="match status" value="1"/>
</dbReference>
<dbReference type="Pfam" id="PF01979">
    <property type="entry name" value="Amidohydro_1"/>
    <property type="match status" value="1"/>
</dbReference>
<dbReference type="SUPFAM" id="SSF51338">
    <property type="entry name" value="Composite domain of metallo-dependent hydrolases"/>
    <property type="match status" value="1"/>
</dbReference>
<dbReference type="SUPFAM" id="SSF51556">
    <property type="entry name" value="Metallo-dependent hydrolases"/>
    <property type="match status" value="1"/>
</dbReference>
<sequence length="403" mass="43709">MFACDELLLNASTIDATGLQLSNQAIVIKKGRIEWCGSEDQLPAHFQESAKSRKDCHGQLITPGLIDCHTHLVYAGHRAAEFRLKLQGVSYADIAKSGGGILSTVQMTRDASEEELIDQSLPRLLALKNEGVTTVEIKSGYGLDLQNELKMLKVARQLGEMAGVRVKTTFLGAHAVGPEFKGNSQAYVDFLCNEMLPAAKNMDLVDTVDVFCESIAFSIRQAEQIFQAAKDLNLPIKCHAEQLSNMGASSLAARYGALSCDHLEFLDENGALNMVKANTVAVLLPGAFYFLKEKQKPPVDLLRQVGVGMAIATDSNPGSSPTTSLLLMMSMACQFFSMSIPEVLSAVTYQASRALGMEKDIGSIEAGKIADLVLWSIKDSAALCYYFAYPLPHQTMVAGEWVS</sequence>